<keyword id="KW-1003">Cell membrane</keyword>
<keyword id="KW-0297">G-protein coupled receptor</keyword>
<keyword id="KW-0325">Glycoprotein</keyword>
<keyword id="KW-0449">Lipoprotein</keyword>
<keyword id="KW-0472">Membrane</keyword>
<keyword id="KW-0564">Palmitate</keyword>
<keyword id="KW-0675">Receptor</keyword>
<keyword id="KW-1185">Reference proteome</keyword>
<keyword id="KW-0807">Transducer</keyword>
<keyword id="KW-0812">Transmembrane</keyword>
<keyword id="KW-1133">Transmembrane helix</keyword>
<comment type="function">
    <text>Receptor for MSH (alpha, beta and gamma) and ACTH. The activity of this receptor is mediated by G proteins which activate adenylate cyclase. This receptor is a possible mediator of the immunomodulation properties of melanocortins.</text>
</comment>
<comment type="subcellular location">
    <subcellularLocation>
        <location>Cell membrane</location>
        <topology>Multi-pass membrane protein</topology>
    </subcellularLocation>
</comment>
<comment type="tissue specificity">
    <text>Skin, adrenal gland, skeletal muscle, bone marrow, spleen, thymus, gonads, uterus and brain.</text>
</comment>
<comment type="similarity">
    <text evidence="2">Belongs to the G-protein coupled receptor 1 family.</text>
</comment>
<comment type="sequence caution" evidence="3">
    <conflict type="erroneous initiation">
        <sequence resource="EMBL-CDS" id="AAA76585"/>
    </conflict>
</comment>
<dbReference type="EMBL" id="X76295">
    <property type="protein sequence ID" value="CAA53943.1"/>
    <property type="molecule type" value="Genomic_DNA"/>
</dbReference>
<dbReference type="EMBL" id="L22527">
    <property type="protein sequence ID" value="AAA21337.1"/>
    <property type="molecule type" value="Genomic_DNA"/>
</dbReference>
<dbReference type="EMBL" id="U08354">
    <property type="protein sequence ID" value="AAA76585.1"/>
    <property type="status" value="ALT_INIT"/>
    <property type="molecule type" value="mRNA"/>
</dbReference>
<dbReference type="PIR" id="I49008">
    <property type="entry name" value="I49008"/>
</dbReference>
<dbReference type="RefSeq" id="NP_038624.3">
    <property type="nucleotide sequence ID" value="NM_013596.3"/>
</dbReference>
<dbReference type="SMR" id="P41149"/>
<dbReference type="FunCoup" id="P41149">
    <property type="interactions" value="1164"/>
</dbReference>
<dbReference type="STRING" id="10090.ENSMUSP00000130497"/>
<dbReference type="BindingDB" id="P41149"/>
<dbReference type="ChEMBL" id="CHEMBL4489"/>
<dbReference type="DrugCentral" id="P41149"/>
<dbReference type="GuidetoPHARMACOLOGY" id="286"/>
<dbReference type="GlyCosmos" id="P41149">
    <property type="glycosylation" value="4 sites, No reported glycans"/>
</dbReference>
<dbReference type="GlyGen" id="P41149">
    <property type="glycosylation" value="4 sites"/>
</dbReference>
<dbReference type="iPTMnet" id="P41149"/>
<dbReference type="PhosphoSitePlus" id="P41149"/>
<dbReference type="PaxDb" id="10090-ENSMUSP00000130497"/>
<dbReference type="Antibodypedia" id="7155">
    <property type="antibodies" value="412 antibodies from 36 providers"/>
</dbReference>
<dbReference type="DNASU" id="17203"/>
<dbReference type="Ensembl" id="ENSMUST00000172148.5">
    <property type="protein sequence ID" value="ENSMUSP00000130497.3"/>
    <property type="gene ID" value="ENSMUSG00000007480.7"/>
</dbReference>
<dbReference type="GeneID" id="17203"/>
<dbReference type="KEGG" id="mmu:17203"/>
<dbReference type="AGR" id="MGI:99420"/>
<dbReference type="CTD" id="4161"/>
<dbReference type="MGI" id="MGI:99420">
    <property type="gene designation" value="Mc5r"/>
</dbReference>
<dbReference type="VEuPathDB" id="HostDB:ENSMUSG00000007480"/>
<dbReference type="eggNOG" id="KOG3656">
    <property type="taxonomic scope" value="Eukaryota"/>
</dbReference>
<dbReference type="GeneTree" id="ENSGT01120000271819"/>
<dbReference type="InParanoid" id="P41149"/>
<dbReference type="OrthoDB" id="5970330at2759"/>
<dbReference type="PhylomeDB" id="P41149"/>
<dbReference type="Reactome" id="R-MMU-375276">
    <property type="pathway name" value="Peptide ligand-binding receptors"/>
</dbReference>
<dbReference type="Reactome" id="R-MMU-418555">
    <property type="pathway name" value="G alpha (s) signalling events"/>
</dbReference>
<dbReference type="PRO" id="PR:P41149"/>
<dbReference type="Proteomes" id="UP000000589">
    <property type="component" value="Chromosome 18"/>
</dbReference>
<dbReference type="RNAct" id="P41149">
    <property type="molecule type" value="protein"/>
</dbReference>
<dbReference type="Bgee" id="ENSMUSG00000007480">
    <property type="expression patterns" value="Expressed in tail skin and 80 other cell types or tissues"/>
</dbReference>
<dbReference type="ExpressionAtlas" id="P41149">
    <property type="expression patterns" value="baseline and differential"/>
</dbReference>
<dbReference type="GO" id="GO:0005886">
    <property type="term" value="C:plasma membrane"/>
    <property type="evidence" value="ECO:0007669"/>
    <property type="project" value="UniProtKB-SubCell"/>
</dbReference>
<dbReference type="GO" id="GO:0042562">
    <property type="term" value="F:hormone binding"/>
    <property type="evidence" value="ECO:0007669"/>
    <property type="project" value="Ensembl"/>
</dbReference>
<dbReference type="GO" id="GO:0004977">
    <property type="term" value="F:melanocortin receptor activity"/>
    <property type="evidence" value="ECO:0007669"/>
    <property type="project" value="Ensembl"/>
</dbReference>
<dbReference type="GO" id="GO:0007189">
    <property type="term" value="P:adenylate cyclase-activating G protein-coupled receptor signaling pathway"/>
    <property type="evidence" value="ECO:0007669"/>
    <property type="project" value="Ensembl"/>
</dbReference>
<dbReference type="FunFam" id="1.20.1070.10:FF:000077">
    <property type="entry name" value="Melanocortin receptor 4"/>
    <property type="match status" value="1"/>
</dbReference>
<dbReference type="Gene3D" id="1.20.1070.10">
    <property type="entry name" value="Rhodopsin 7-helix transmembrane proteins"/>
    <property type="match status" value="1"/>
</dbReference>
<dbReference type="InterPro" id="IPR000276">
    <property type="entry name" value="GPCR_Rhodpsn"/>
</dbReference>
<dbReference type="InterPro" id="IPR017452">
    <property type="entry name" value="GPCR_Rhodpsn_7TM"/>
</dbReference>
<dbReference type="InterPro" id="IPR001908">
    <property type="entry name" value="MC3-5R"/>
</dbReference>
<dbReference type="InterPro" id="IPR000621">
    <property type="entry name" value="Melancort_rcpt_5"/>
</dbReference>
<dbReference type="InterPro" id="IPR001671">
    <property type="entry name" value="Melcrt_ACTH_rcpt"/>
</dbReference>
<dbReference type="PANTHER" id="PTHR22750">
    <property type="entry name" value="G-PROTEIN COUPLED RECEPTOR"/>
    <property type="match status" value="1"/>
</dbReference>
<dbReference type="Pfam" id="PF00001">
    <property type="entry name" value="7tm_1"/>
    <property type="match status" value="1"/>
</dbReference>
<dbReference type="PRINTS" id="PR00237">
    <property type="entry name" value="GPCRRHODOPSN"/>
</dbReference>
<dbReference type="PRINTS" id="PR00534">
    <property type="entry name" value="MCRFAMILY"/>
</dbReference>
<dbReference type="PRINTS" id="PR00535">
    <property type="entry name" value="MELNOCORTINR"/>
</dbReference>
<dbReference type="PRINTS" id="PR01063">
    <property type="entry name" value="MELNOCORTN5R"/>
</dbReference>
<dbReference type="SMART" id="SM01381">
    <property type="entry name" value="7TM_GPCR_Srsx"/>
    <property type="match status" value="1"/>
</dbReference>
<dbReference type="SUPFAM" id="SSF81321">
    <property type="entry name" value="Family A G protein-coupled receptor-like"/>
    <property type="match status" value="1"/>
</dbReference>
<dbReference type="PROSITE" id="PS00237">
    <property type="entry name" value="G_PROTEIN_RECEP_F1_1"/>
    <property type="match status" value="1"/>
</dbReference>
<dbReference type="PROSITE" id="PS50262">
    <property type="entry name" value="G_PROTEIN_RECEP_F1_2"/>
    <property type="match status" value="1"/>
</dbReference>
<evidence type="ECO:0000255" key="1"/>
<evidence type="ECO:0000255" key="2">
    <source>
        <dbReference type="PROSITE-ProRule" id="PRU00521"/>
    </source>
</evidence>
<evidence type="ECO:0000305" key="3"/>
<gene>
    <name type="primary">Mc5r</name>
</gene>
<reference key="1">
    <citation type="journal article" date="1994" name="Biochemistry">
        <title>Molecular cloning of a mouse melanocortin 5 receptor gene widely expressed in peripheral tissues.</title>
        <authorList>
            <person name="Labbe O."/>
            <person name="Desarnaud F."/>
            <person name="Eggerickx D."/>
            <person name="Vassart G."/>
            <person name="Parmentier M."/>
        </authorList>
    </citation>
    <scope>NUCLEOTIDE SEQUENCE [GENOMIC DNA]</scope>
    <source>
        <strain>129/Sv</strain>
    </source>
</reference>
<reference key="2">
    <citation type="journal article" date="1994" name="Biochem. Biophys. Res. Commun.">
        <title>Molecular cloning, expression, and characterization of a fifth melanocortin receptor.</title>
        <authorList>
            <person name="Gantz I."/>
            <person name="Shimoto Y."/>
            <person name="Konda Y."/>
            <person name="Miwa H."/>
            <person name="Dickinson C.J."/>
            <person name="Yamada T."/>
        </authorList>
    </citation>
    <scope>NUCLEOTIDE SEQUENCE [GENOMIC DNA]</scope>
</reference>
<reference key="3">
    <citation type="journal article" date="1995" name="Neurochem. Res.">
        <title>Cloning, expression, and tissue distribution of a fifth melanocortin receptor subtype.</title>
        <authorList>
            <person name="Fathi Z."/>
            <person name="Iben L.G."/>
            <person name="Parker E.M."/>
        </authorList>
    </citation>
    <scope>NUCLEOTIDE SEQUENCE [MRNA]</scope>
    <source>
        <tissue>Brain</tissue>
    </source>
</reference>
<protein>
    <recommendedName>
        <fullName>Melanocortin receptor 5</fullName>
        <shortName>MC5-R</shortName>
    </recommendedName>
</protein>
<feature type="chain" id="PRO_0000069729" description="Melanocortin receptor 5">
    <location>
        <begin position="1"/>
        <end position="325"/>
    </location>
</feature>
<feature type="topological domain" description="Extracellular" evidence="1">
    <location>
        <begin position="1"/>
        <end position="37"/>
    </location>
</feature>
<feature type="transmembrane region" description="Helical; Name=1" evidence="1">
    <location>
        <begin position="38"/>
        <end position="61"/>
    </location>
</feature>
<feature type="topological domain" description="Cytoplasmic" evidence="1">
    <location>
        <begin position="62"/>
        <end position="73"/>
    </location>
</feature>
<feature type="transmembrane region" description="Helical; Name=2" evidence="1">
    <location>
        <begin position="74"/>
        <end position="97"/>
    </location>
</feature>
<feature type="topological domain" description="Extracellular" evidence="1">
    <location>
        <begin position="98"/>
        <end position="114"/>
    </location>
</feature>
<feature type="transmembrane region" description="Helical; Name=3" evidence="1">
    <location>
        <begin position="115"/>
        <end position="138"/>
    </location>
</feature>
<feature type="topological domain" description="Cytoplasmic" evidence="1">
    <location>
        <begin position="139"/>
        <end position="155"/>
    </location>
</feature>
<feature type="transmembrane region" description="Helical; Name=4" evidence="1">
    <location>
        <begin position="156"/>
        <end position="179"/>
    </location>
</feature>
<feature type="topological domain" description="Extracellular" evidence="1">
    <location>
        <begin position="180"/>
        <end position="186"/>
    </location>
</feature>
<feature type="transmembrane region" description="Helical; Name=5" evidence="1">
    <location>
        <begin position="187"/>
        <end position="211"/>
    </location>
</feature>
<feature type="topological domain" description="Cytoplasmic" evidence="1">
    <location>
        <begin position="212"/>
        <end position="239"/>
    </location>
</feature>
<feature type="transmembrane region" description="Helical; Name=6" evidence="1">
    <location>
        <begin position="240"/>
        <end position="265"/>
    </location>
</feature>
<feature type="topological domain" description="Extracellular" evidence="1">
    <location>
        <begin position="266"/>
        <end position="273"/>
    </location>
</feature>
<feature type="transmembrane region" description="Helical; Name=7" evidence="1">
    <location>
        <begin position="274"/>
        <end position="297"/>
    </location>
</feature>
<feature type="topological domain" description="Cytoplasmic" evidence="1">
    <location>
        <begin position="298"/>
        <end position="325"/>
    </location>
</feature>
<feature type="lipid moiety-binding region" description="S-palmitoyl cysteine" evidence="1">
    <location>
        <position position="311"/>
    </location>
</feature>
<feature type="lipid moiety-binding region" description="S-palmitoyl cysteine" evidence="1">
    <location>
        <position position="312"/>
    </location>
</feature>
<feature type="glycosylation site" description="N-linked (GlcNAc...) asparagine" evidence="1">
    <location>
        <position position="2"/>
    </location>
</feature>
<feature type="glycosylation site" description="N-linked (GlcNAc...) asparagine" evidence="1">
    <location>
        <position position="11"/>
    </location>
</feature>
<feature type="glycosylation site" description="N-linked (GlcNAc...) asparagine" evidence="1">
    <location>
        <position position="15"/>
    </location>
</feature>
<feature type="glycosylation site" description="N-linked (GlcNAc...) asparagine" evidence="1">
    <location>
        <position position="28"/>
    </location>
</feature>
<feature type="sequence conflict" description="In Ref. 2 and 3." evidence="3" ref="2 3">
    <original>F</original>
    <variation>Y</variation>
    <location>
        <position position="74"/>
    </location>
</feature>
<proteinExistence type="evidence at transcript level"/>
<name>MC5R_MOUSE</name>
<sequence>MNSSSTLTVLNLTLNASEDGILGSNVKNKSLACEEMGIAVEVFLTLGLVSLLENILVIGAIVKNKNLHSPMYFFVGSLAVADMLVSMSNAWETVTIYLLNNKHLVIADTFVRHIDNVFDSMICISVVASMCSLLAIAVDRYITIFYALRYHHIMTARRSGVIIACIWTFCISCGIVFIIYYESKYVIICLISMFFTMLFFMVSLYIHMFLLARNHVKRIAASPRYNSVRQRTSMKGAITLTMLLGIFIVCWSPFFLHLILMISCPQNVYCSCFMSYFNMYLILIMCNSVIDPLIYALRSQEMRRTFKEIVCCHGFRRPCRLLGGY</sequence>
<organism>
    <name type="scientific">Mus musculus</name>
    <name type="common">Mouse</name>
    <dbReference type="NCBI Taxonomy" id="10090"/>
    <lineage>
        <taxon>Eukaryota</taxon>
        <taxon>Metazoa</taxon>
        <taxon>Chordata</taxon>
        <taxon>Craniata</taxon>
        <taxon>Vertebrata</taxon>
        <taxon>Euteleostomi</taxon>
        <taxon>Mammalia</taxon>
        <taxon>Eutheria</taxon>
        <taxon>Euarchontoglires</taxon>
        <taxon>Glires</taxon>
        <taxon>Rodentia</taxon>
        <taxon>Myomorpha</taxon>
        <taxon>Muroidea</taxon>
        <taxon>Muridae</taxon>
        <taxon>Murinae</taxon>
        <taxon>Mus</taxon>
        <taxon>Mus</taxon>
    </lineage>
</organism>
<accession>P41149</accession>